<organism>
    <name type="scientific">Bacillus licheniformis (strain ATCC 14580 / DSM 13 / JCM 2505 / CCUG 7422 / NBRC 12200 / NCIMB 9375 / NCTC 10341 / NRRL NRS-1264 / Gibson 46)</name>
    <dbReference type="NCBI Taxonomy" id="279010"/>
    <lineage>
        <taxon>Bacteria</taxon>
        <taxon>Bacillati</taxon>
        <taxon>Bacillota</taxon>
        <taxon>Bacilli</taxon>
        <taxon>Bacillales</taxon>
        <taxon>Bacillaceae</taxon>
        <taxon>Bacillus</taxon>
    </lineage>
</organism>
<keyword id="KW-0170">Cobalt</keyword>
<keyword id="KW-0456">Lyase</keyword>
<keyword id="KW-0464">Manganese</keyword>
<keyword id="KW-1185">Reference proteome</keyword>
<reference key="1">
    <citation type="journal article" date="2004" name="J. Mol. Microbiol. Biotechnol.">
        <title>The complete genome sequence of Bacillus licheniformis DSM13, an organism with great industrial potential.</title>
        <authorList>
            <person name="Veith B."/>
            <person name="Herzberg C."/>
            <person name="Steckel S."/>
            <person name="Feesche J."/>
            <person name="Maurer K.H."/>
            <person name="Ehrenreich P."/>
            <person name="Baeumer S."/>
            <person name="Henne A."/>
            <person name="Liesegang H."/>
            <person name="Merkl R."/>
            <person name="Ehrenreich A."/>
            <person name="Gottschalk G."/>
        </authorList>
    </citation>
    <scope>NUCLEOTIDE SEQUENCE [LARGE SCALE GENOMIC DNA]</scope>
    <source>
        <strain>ATCC 14580 / DSM 13 / JCM 2505 / CCUG 7422 / NBRC 12200 / NCIMB 9375 / NCTC 10341 / NRRL NRS-1264 / Gibson 46</strain>
    </source>
</reference>
<reference key="2">
    <citation type="journal article" date="2004" name="Genome Biol.">
        <title>Complete genome sequence of the industrial bacterium Bacillus licheniformis and comparisons with closely related Bacillus species.</title>
        <authorList>
            <person name="Rey M.W."/>
            <person name="Ramaiya P."/>
            <person name="Nelson B.A."/>
            <person name="Brody-Karpin S.D."/>
            <person name="Zaretsky E.J."/>
            <person name="Tang M."/>
            <person name="Lopez de Leon A."/>
            <person name="Xiang H."/>
            <person name="Gusti V."/>
            <person name="Clausen I.G."/>
            <person name="Olsen P.B."/>
            <person name="Rasmussen M.D."/>
            <person name="Andersen J.T."/>
            <person name="Joergensen P.L."/>
            <person name="Larsen T.S."/>
            <person name="Sorokin A."/>
            <person name="Bolotin A."/>
            <person name="Lapidus A."/>
            <person name="Galleron N."/>
            <person name="Ehrlich S.D."/>
            <person name="Berka R.M."/>
        </authorList>
    </citation>
    <scope>NUCLEOTIDE SEQUENCE [LARGE SCALE GENOMIC DNA]</scope>
    <source>
        <strain>ATCC 14580 / DSM 13 / JCM 2505 / CCUG 7422 / NBRC 12200 / NCIMB 9375 / NCTC 10341 / NRRL NRS-1264 / Gibson 46</strain>
    </source>
</reference>
<gene>
    <name evidence="1" type="primary">iolE</name>
    <name type="ordered locus">BLi04247</name>
    <name type="ordered locus">BL00242</name>
</gene>
<sequence>MGKTQILWGIAPIGWRNDDIPEIGAGNTLQHLLSDIVVAGFQGTEVGGFFPEPAILNKELELRNLRIAGKWFSSYIIRDGIEEAAKEFAAHCQYLKDVHADVAVVSEQTYSVQGLDKNVFKEKPYFTDEEWQRLFEGLNHLGEIAGRYGLKLVYHHHLGTGVQTEEEVDRLMAGTDPALVHLLYDTGHAYISDGNYMNILEKHIDRIRHVHFKDARLKIMEKCKREGNSFQQAFLQGMFTVPGDGCIDFREVYQTLLKHGYSGWIVVEAEQDPDVANPLEYALIARKYIDRHLLNVPATN</sequence>
<accession>Q65D04</accession>
<accession>Q62NI0</accession>
<name>IOLE_BACLD</name>
<comment type="function">
    <text evidence="1">Catalyzes the dehydration of inosose (2-keto-myo-inositol, 2KMI or 2,4,6/3,5-pentahydroxycyclohexanone) to 3D-(3,5/4)-trihydroxycyclohexane-1,2-dione (D-2,3-diketo-4-deoxy-epi-inositol).</text>
</comment>
<comment type="catalytic activity">
    <reaction evidence="1">
        <text>scyllo-inosose = 3D-3,5/4-trihydroxycyclohexane-1,2-dione + H2O</text>
        <dbReference type="Rhea" id="RHEA:14065"/>
        <dbReference type="ChEBI" id="CHEBI:15377"/>
        <dbReference type="ChEBI" id="CHEBI:17811"/>
        <dbReference type="ChEBI" id="CHEBI:28446"/>
        <dbReference type="EC" id="4.2.1.44"/>
    </reaction>
</comment>
<comment type="cofactor">
    <cofactor evidence="1">
        <name>glutathione</name>
        <dbReference type="ChEBI" id="CHEBI:57925"/>
    </cofactor>
</comment>
<comment type="cofactor">
    <cofactor evidence="1">
        <name>Co(2+)</name>
        <dbReference type="ChEBI" id="CHEBI:48828"/>
    </cofactor>
    <cofactor evidence="1">
        <name>Mn(2+)</name>
        <dbReference type="ChEBI" id="CHEBI:29035"/>
    </cofactor>
</comment>
<comment type="pathway">
    <text evidence="1">Polyol metabolism; myo-inositol degradation into acetyl-CoA; acetyl-CoA from myo-inositol: step 2/7.</text>
</comment>
<comment type="similarity">
    <text evidence="1">Belongs to the IolE/MocC family.</text>
</comment>
<dbReference type="EC" id="4.2.1.44" evidence="1"/>
<dbReference type="EMBL" id="CP000002">
    <property type="protein sequence ID" value="AAU25681.1"/>
    <property type="molecule type" value="Genomic_DNA"/>
</dbReference>
<dbReference type="EMBL" id="AE017333">
    <property type="protein sequence ID" value="AAU43060.1"/>
    <property type="molecule type" value="Genomic_DNA"/>
</dbReference>
<dbReference type="RefSeq" id="WP_003177815.1">
    <property type="nucleotide sequence ID" value="NC_006322.1"/>
</dbReference>
<dbReference type="SMR" id="Q65D04"/>
<dbReference type="STRING" id="279010.BL00242"/>
<dbReference type="GeneID" id="92859183"/>
<dbReference type="KEGG" id="bld:BLi04247"/>
<dbReference type="KEGG" id="bli:BL00242"/>
<dbReference type="PATRIC" id="fig|279010.13.peg.4331"/>
<dbReference type="eggNOG" id="COG1082">
    <property type="taxonomic scope" value="Bacteria"/>
</dbReference>
<dbReference type="HOGENOM" id="CLU_059523_0_0_9"/>
<dbReference type="UniPathway" id="UPA00076">
    <property type="reaction ID" value="UER00144"/>
</dbReference>
<dbReference type="Proteomes" id="UP000000606">
    <property type="component" value="Chromosome"/>
</dbReference>
<dbReference type="GO" id="GO:0030145">
    <property type="term" value="F:manganese ion binding"/>
    <property type="evidence" value="ECO:0007669"/>
    <property type="project" value="UniProtKB-UniRule"/>
</dbReference>
<dbReference type="GO" id="GO:0050114">
    <property type="term" value="F:myo-inosose-2 dehydratase activity"/>
    <property type="evidence" value="ECO:0007669"/>
    <property type="project" value="UniProtKB-UniRule"/>
</dbReference>
<dbReference type="GO" id="GO:0019310">
    <property type="term" value="P:inositol catabolic process"/>
    <property type="evidence" value="ECO:0007669"/>
    <property type="project" value="UniProtKB-UniRule"/>
</dbReference>
<dbReference type="Gene3D" id="3.20.20.150">
    <property type="entry name" value="Divalent-metal-dependent TIM barrel enzymes"/>
    <property type="match status" value="1"/>
</dbReference>
<dbReference type="HAMAP" id="MF_01672">
    <property type="entry name" value="IolE"/>
    <property type="match status" value="1"/>
</dbReference>
<dbReference type="InterPro" id="IPR023952">
    <property type="entry name" value="IolE"/>
</dbReference>
<dbReference type="InterPro" id="IPR030823">
    <property type="entry name" value="IolE/MocC"/>
</dbReference>
<dbReference type="InterPro" id="IPR050312">
    <property type="entry name" value="IolE/XylAMocC-like"/>
</dbReference>
<dbReference type="InterPro" id="IPR036237">
    <property type="entry name" value="Xyl_isomerase-like_sf"/>
</dbReference>
<dbReference type="InterPro" id="IPR013022">
    <property type="entry name" value="Xyl_isomerase-like_TIM-brl"/>
</dbReference>
<dbReference type="NCBIfam" id="TIGR04379">
    <property type="entry name" value="myo_inos_iolE"/>
    <property type="match status" value="1"/>
</dbReference>
<dbReference type="PANTHER" id="PTHR12110">
    <property type="entry name" value="HYDROXYPYRUVATE ISOMERASE"/>
    <property type="match status" value="1"/>
</dbReference>
<dbReference type="PANTHER" id="PTHR12110:SF41">
    <property type="entry name" value="INOSOSE DEHYDRATASE"/>
    <property type="match status" value="1"/>
</dbReference>
<dbReference type="Pfam" id="PF01261">
    <property type="entry name" value="AP_endonuc_2"/>
    <property type="match status" value="1"/>
</dbReference>
<dbReference type="SUPFAM" id="SSF51658">
    <property type="entry name" value="Xylose isomerase-like"/>
    <property type="match status" value="1"/>
</dbReference>
<proteinExistence type="inferred from homology"/>
<evidence type="ECO:0000255" key="1">
    <source>
        <dbReference type="HAMAP-Rule" id="MF_01672"/>
    </source>
</evidence>
<protein>
    <recommendedName>
        <fullName evidence="1">Inosose dehydratase</fullName>
        <ecNumber evidence="1">4.2.1.44</ecNumber>
    </recommendedName>
    <alternativeName>
        <fullName evidence="1">2-keto-myo-inositol dehydratase</fullName>
        <shortName evidence="1">2KMI dehydratase</shortName>
    </alternativeName>
</protein>
<feature type="chain" id="PRO_0000352358" description="Inosose dehydratase">
    <location>
        <begin position="1"/>
        <end position="300"/>
    </location>
</feature>